<organism>
    <name type="scientific">Latilactobacillus sakei subsp. sakei (strain 23K)</name>
    <name type="common">Lactobacillus sakei subsp. sakei</name>
    <dbReference type="NCBI Taxonomy" id="314315"/>
    <lineage>
        <taxon>Bacteria</taxon>
        <taxon>Bacillati</taxon>
        <taxon>Bacillota</taxon>
        <taxon>Bacilli</taxon>
        <taxon>Lactobacillales</taxon>
        <taxon>Lactobacillaceae</taxon>
        <taxon>Latilactobacillus</taxon>
    </lineage>
</organism>
<dbReference type="EC" id="6.3.4.3" evidence="1"/>
<dbReference type="EMBL" id="CR936503">
    <property type="protein sequence ID" value="CAI55249.1"/>
    <property type="molecule type" value="Genomic_DNA"/>
</dbReference>
<dbReference type="RefSeq" id="WP_011374649.1">
    <property type="nucleotide sequence ID" value="NC_007576.1"/>
</dbReference>
<dbReference type="SMR" id="Q38X32"/>
<dbReference type="STRING" id="314315.LCA_0947"/>
<dbReference type="KEGG" id="lsa:LCA_0947"/>
<dbReference type="eggNOG" id="COG2759">
    <property type="taxonomic scope" value="Bacteria"/>
</dbReference>
<dbReference type="HOGENOM" id="CLU_003601_3_3_9"/>
<dbReference type="OrthoDB" id="9761733at2"/>
<dbReference type="UniPathway" id="UPA00193"/>
<dbReference type="Proteomes" id="UP000002707">
    <property type="component" value="Chromosome"/>
</dbReference>
<dbReference type="GO" id="GO:0005524">
    <property type="term" value="F:ATP binding"/>
    <property type="evidence" value="ECO:0007669"/>
    <property type="project" value="UniProtKB-UniRule"/>
</dbReference>
<dbReference type="GO" id="GO:0004329">
    <property type="term" value="F:formate-tetrahydrofolate ligase activity"/>
    <property type="evidence" value="ECO:0007669"/>
    <property type="project" value="UniProtKB-UniRule"/>
</dbReference>
<dbReference type="GO" id="GO:0035999">
    <property type="term" value="P:tetrahydrofolate interconversion"/>
    <property type="evidence" value="ECO:0007669"/>
    <property type="project" value="UniProtKB-UniRule"/>
</dbReference>
<dbReference type="CDD" id="cd00477">
    <property type="entry name" value="FTHFS"/>
    <property type="match status" value="1"/>
</dbReference>
<dbReference type="FunFam" id="3.30.1510.10:FF:000001">
    <property type="entry name" value="Formate--tetrahydrofolate ligase"/>
    <property type="match status" value="1"/>
</dbReference>
<dbReference type="FunFam" id="3.10.410.10:FF:000001">
    <property type="entry name" value="Putative formate--tetrahydrofolate ligase"/>
    <property type="match status" value="1"/>
</dbReference>
<dbReference type="Gene3D" id="3.30.1510.10">
    <property type="entry name" value="Domain 2, N(10)-formyltetrahydrofolate synthetase"/>
    <property type="match status" value="1"/>
</dbReference>
<dbReference type="Gene3D" id="3.10.410.10">
    <property type="entry name" value="Formyltetrahydrofolate synthetase, domain 3"/>
    <property type="match status" value="1"/>
</dbReference>
<dbReference type="Gene3D" id="3.40.50.300">
    <property type="entry name" value="P-loop containing nucleotide triphosphate hydrolases"/>
    <property type="match status" value="1"/>
</dbReference>
<dbReference type="HAMAP" id="MF_01543">
    <property type="entry name" value="FTHFS"/>
    <property type="match status" value="1"/>
</dbReference>
<dbReference type="InterPro" id="IPR000559">
    <property type="entry name" value="Formate_THF_ligase"/>
</dbReference>
<dbReference type="InterPro" id="IPR020628">
    <property type="entry name" value="Formate_THF_ligase_CS"/>
</dbReference>
<dbReference type="InterPro" id="IPR027417">
    <property type="entry name" value="P-loop_NTPase"/>
</dbReference>
<dbReference type="NCBIfam" id="NF010030">
    <property type="entry name" value="PRK13505.1"/>
    <property type="match status" value="1"/>
</dbReference>
<dbReference type="Pfam" id="PF01268">
    <property type="entry name" value="FTHFS"/>
    <property type="match status" value="1"/>
</dbReference>
<dbReference type="SUPFAM" id="SSF52540">
    <property type="entry name" value="P-loop containing nucleoside triphosphate hydrolases"/>
    <property type="match status" value="1"/>
</dbReference>
<dbReference type="PROSITE" id="PS00721">
    <property type="entry name" value="FTHFS_1"/>
    <property type="match status" value="1"/>
</dbReference>
<dbReference type="PROSITE" id="PS00722">
    <property type="entry name" value="FTHFS_2"/>
    <property type="match status" value="1"/>
</dbReference>
<accession>Q38X32</accession>
<proteinExistence type="inferred from homology"/>
<gene>
    <name evidence="1" type="primary">fhs</name>
    <name type="ordered locus">LCA_0947</name>
</gene>
<comment type="catalytic activity">
    <reaction evidence="1">
        <text>(6S)-5,6,7,8-tetrahydrofolate + formate + ATP = (6R)-10-formyltetrahydrofolate + ADP + phosphate</text>
        <dbReference type="Rhea" id="RHEA:20221"/>
        <dbReference type="ChEBI" id="CHEBI:15740"/>
        <dbReference type="ChEBI" id="CHEBI:30616"/>
        <dbReference type="ChEBI" id="CHEBI:43474"/>
        <dbReference type="ChEBI" id="CHEBI:57453"/>
        <dbReference type="ChEBI" id="CHEBI:195366"/>
        <dbReference type="ChEBI" id="CHEBI:456216"/>
        <dbReference type="EC" id="6.3.4.3"/>
    </reaction>
</comment>
<comment type="pathway">
    <text evidence="1">One-carbon metabolism; tetrahydrofolate interconversion.</text>
</comment>
<comment type="similarity">
    <text evidence="1">Belongs to the formate--tetrahydrofolate ligase family.</text>
</comment>
<name>FTHS_LATSS</name>
<evidence type="ECO:0000255" key="1">
    <source>
        <dbReference type="HAMAP-Rule" id="MF_01543"/>
    </source>
</evidence>
<feature type="chain" id="PRO_0000293042" description="Formate--tetrahydrofolate ligase">
    <location>
        <begin position="1"/>
        <end position="557"/>
    </location>
</feature>
<feature type="binding site" evidence="1">
    <location>
        <begin position="67"/>
        <end position="74"/>
    </location>
    <ligand>
        <name>ATP</name>
        <dbReference type="ChEBI" id="CHEBI:30616"/>
    </ligand>
</feature>
<protein>
    <recommendedName>
        <fullName evidence="1">Formate--tetrahydrofolate ligase</fullName>
        <ecNumber evidence="1">6.3.4.3</ecNumber>
    </recommendedName>
    <alternativeName>
        <fullName evidence="1">Formyltetrahydrofolate synthetase</fullName>
        <shortName evidence="1">FHS</shortName>
        <shortName evidence="1">FTHFS</shortName>
    </alternativeName>
</protein>
<reference key="1">
    <citation type="journal article" date="2005" name="Nat. Biotechnol.">
        <title>The complete genome sequence of the meat-borne lactic acid bacterium Lactobacillus sakei 23K.</title>
        <authorList>
            <person name="Chaillou S."/>
            <person name="Champomier-Verges M.-C."/>
            <person name="Cornet M."/>
            <person name="Crutz-Le Coq A.-M."/>
            <person name="Dudez A.-M."/>
            <person name="Martin V."/>
            <person name="Beaufils S."/>
            <person name="Darbon-Rongere E."/>
            <person name="Bossy R."/>
            <person name="Loux V."/>
            <person name="Zagorec M."/>
        </authorList>
    </citation>
    <scope>NUCLEOTIDE SEQUENCE [LARGE SCALE GENOMIC DNA]</scope>
    <source>
        <strain>23K</strain>
    </source>
</reference>
<keyword id="KW-0067">ATP-binding</keyword>
<keyword id="KW-0436">Ligase</keyword>
<keyword id="KW-0547">Nucleotide-binding</keyword>
<keyword id="KW-0554">One-carbon metabolism</keyword>
<keyword id="KW-1185">Reference proteome</keyword>
<sequence length="557" mass="59070">MSDIQIAQANEATEMKSITAIAEQIGLQATDIEQYGPYKAKLNFQAINRLKEKEDGKLVLVTSINPTPAGEGKSTVTVGLGDALRQLDQSAVIALREPSLGPVMGMKGGATGGGYAQVVPMADINLHFTGDMHALTATVNTLAALIDNHLQQGNVLNIDPRRIIWKRALDINDRALRQVVIGLGGPVQGMPRQDGFDITVASELMAILCLATDITDLKNRISKIVIGYNYDREPVTVGDLEVTGAIAMLLKDALKPNMVQTLEHTPALVHGGPFANIAHGCNSILATQTALKLGDIAITEAGFGADLGAEKFLDIKVPQLGKTPDTIVIVATIRALKYNGGVALADLTTENLDALKAGFSNLAKHIANMQRYGVPVVVSVNEFTSDTAAEVQLLQDLCQAMKVTAVPTSVWANGGQGGIELAKAVLAALQQPKAFKPLYDPQADIKSKLTTVVTEIYGGRDVVFEGKAINQLKQIEKNGWAHLPVCIAKTQYSLSDDPKALGAPSDFTIHVRELIPKLGAGFIVAMTGAVLTMPGLPKKPAALNMDVTADGQISGLF</sequence>